<accession>Q9FI32</accession>
<reference key="1">
    <citation type="journal article" date="1999" name="DNA Res.">
        <title>Structural analysis of Arabidopsis thaliana chromosome 5. IX. Sequence features of the regions of 1,011,550 bp covered by seventeen P1 and TAC clones.</title>
        <authorList>
            <person name="Kaneko T."/>
            <person name="Katoh T."/>
            <person name="Sato S."/>
            <person name="Nakamura Y."/>
            <person name="Asamizu E."/>
            <person name="Kotani H."/>
            <person name="Miyajima N."/>
            <person name="Tabata S."/>
        </authorList>
    </citation>
    <scope>NUCLEOTIDE SEQUENCE [LARGE SCALE GENOMIC DNA]</scope>
    <source>
        <strain>cv. Columbia</strain>
    </source>
</reference>
<reference key="2">
    <citation type="journal article" date="2017" name="Plant J.">
        <title>Araport11: a complete reannotation of the Arabidopsis thaliana reference genome.</title>
        <authorList>
            <person name="Cheng C.Y."/>
            <person name="Krishnakumar V."/>
            <person name="Chan A.P."/>
            <person name="Thibaud-Nissen F."/>
            <person name="Schobel S."/>
            <person name="Town C.D."/>
        </authorList>
    </citation>
    <scope>GENOME REANNOTATION</scope>
    <source>
        <strain>cv. Columbia</strain>
    </source>
</reference>
<reference key="3">
    <citation type="journal article" date="2018" name="Plant Physiol.">
        <title>Characterization of multiple C2 domain and transmembrane region proteins in Arabidopsis.</title>
        <authorList>
            <person name="Liu L."/>
            <person name="Li C."/>
            <person name="Liang Z."/>
            <person name="Yu H."/>
        </authorList>
    </citation>
    <scope>TISSUE SPECIFICITY</scope>
    <scope>DEVELOPMENTAL STAGE</scope>
    <scope>SUBCELLULAR LOCATION</scope>
    <scope>GENE FAMILY</scope>
    <scope>NOMENCLATURE</scope>
    <source>
        <strain>cv. Columbia</strain>
    </source>
</reference>
<comment type="function">
    <text evidence="5">May function as a signaling molecule by regulating the trafficking of other regulators.</text>
</comment>
<comment type="cofactor">
    <cofactor evidence="2">
        <name>Ca(2+)</name>
        <dbReference type="ChEBI" id="CHEBI:29108"/>
    </cofactor>
</comment>
<comment type="subcellular location">
    <subcellularLocation>
        <location evidence="4">Cell membrane</location>
        <topology evidence="1">Multi-pass membrane protein</topology>
    </subcellularLocation>
</comment>
<comment type="tissue specificity">
    <text evidence="4">Expressed in the vascular tissues of roots and rosette leaves (PubMed:29259105). Accumulates in roots meristems (PubMed:29259105). Observed in flowers (PubMed:29259105).</text>
</comment>
<comment type="developmental stage">
    <text evidence="4">Present in developing flowers.</text>
</comment>
<comment type="similarity">
    <text evidence="6">Belongs to the MCTP family.</text>
</comment>
<gene>
    <name evidence="5" type="primary">MCTP2</name>
    <name evidence="7" type="ordered locus">At5g48060</name>
    <name evidence="8" type="ORF">MDN11.14</name>
</gene>
<evidence type="ECO:0000255" key="1"/>
<evidence type="ECO:0000255" key="2">
    <source>
        <dbReference type="PROSITE-ProRule" id="PRU00041"/>
    </source>
</evidence>
<evidence type="ECO:0000256" key="3">
    <source>
        <dbReference type="SAM" id="MobiDB-lite"/>
    </source>
</evidence>
<evidence type="ECO:0000269" key="4">
    <source>
    </source>
</evidence>
<evidence type="ECO:0000303" key="5">
    <source>
    </source>
</evidence>
<evidence type="ECO:0000305" key="6"/>
<evidence type="ECO:0000312" key="7">
    <source>
        <dbReference type="Araport" id="AT5G48060"/>
    </source>
</evidence>
<evidence type="ECO:0000312" key="8">
    <source>
        <dbReference type="EMBL" id="BAB11070.1"/>
    </source>
</evidence>
<name>MCTP2_ARATH</name>
<proteinExistence type="evidence at transcript level"/>
<dbReference type="EMBL" id="AB017064">
    <property type="protein sequence ID" value="BAB11070.1"/>
    <property type="molecule type" value="Genomic_DNA"/>
</dbReference>
<dbReference type="EMBL" id="CP002688">
    <property type="protein sequence ID" value="AED95615.1"/>
    <property type="molecule type" value="Genomic_DNA"/>
</dbReference>
<dbReference type="RefSeq" id="NP_199617.1">
    <property type="nucleotide sequence ID" value="NM_124180.3"/>
</dbReference>
<dbReference type="SMR" id="Q9FI32"/>
<dbReference type="FunCoup" id="Q9FI32">
    <property type="interactions" value="368"/>
</dbReference>
<dbReference type="STRING" id="3702.Q9FI32"/>
<dbReference type="PaxDb" id="3702-AT5G48060.1"/>
<dbReference type="ProteomicsDB" id="187603"/>
<dbReference type="EnsemblPlants" id="AT5G48060.1">
    <property type="protein sequence ID" value="AT5G48060.1"/>
    <property type="gene ID" value="AT5G48060"/>
</dbReference>
<dbReference type="GeneID" id="834858"/>
<dbReference type="Gramene" id="AT5G48060.1">
    <property type="protein sequence ID" value="AT5G48060.1"/>
    <property type="gene ID" value="AT5G48060"/>
</dbReference>
<dbReference type="KEGG" id="ath:AT5G48060"/>
<dbReference type="Araport" id="AT5G48060"/>
<dbReference type="TAIR" id="AT5G48060">
    <property type="gene designation" value="MCTP2"/>
</dbReference>
<dbReference type="eggNOG" id="ENOG502QR9H">
    <property type="taxonomic scope" value="Eukaryota"/>
</dbReference>
<dbReference type="HOGENOM" id="CLU_003762_1_0_1"/>
<dbReference type="InParanoid" id="Q9FI32"/>
<dbReference type="OMA" id="DMKLSWA"/>
<dbReference type="PRO" id="PR:Q9FI32"/>
<dbReference type="Proteomes" id="UP000006548">
    <property type="component" value="Chromosome 5"/>
</dbReference>
<dbReference type="ExpressionAtlas" id="Q9FI32">
    <property type="expression patterns" value="baseline and differential"/>
</dbReference>
<dbReference type="GO" id="GO:0005886">
    <property type="term" value="C:plasma membrane"/>
    <property type="evidence" value="ECO:0007669"/>
    <property type="project" value="UniProtKB-SubCell"/>
</dbReference>
<dbReference type="GO" id="GO:0016757">
    <property type="term" value="F:glycosyltransferase activity"/>
    <property type="evidence" value="ECO:0007669"/>
    <property type="project" value="UniProtKB-KW"/>
</dbReference>
<dbReference type="GO" id="GO:0046872">
    <property type="term" value="F:metal ion binding"/>
    <property type="evidence" value="ECO:0007669"/>
    <property type="project" value="UniProtKB-KW"/>
</dbReference>
<dbReference type="CDD" id="cd04022">
    <property type="entry name" value="C2A_MCTP_PRT_plant"/>
    <property type="match status" value="1"/>
</dbReference>
<dbReference type="CDD" id="cd08378">
    <property type="entry name" value="C2B_MCTP_PRT_plant"/>
    <property type="match status" value="1"/>
</dbReference>
<dbReference type="CDD" id="cd04019">
    <property type="entry name" value="C2C_MCTP_PRT_plant"/>
    <property type="match status" value="1"/>
</dbReference>
<dbReference type="CDD" id="cd08379">
    <property type="entry name" value="C2D_MCTP_PRT_plant"/>
    <property type="match status" value="1"/>
</dbReference>
<dbReference type="FunFam" id="2.60.40.150:FF:000090">
    <property type="entry name" value="C2 domain-containing protein"/>
    <property type="match status" value="1"/>
</dbReference>
<dbReference type="FunFam" id="2.60.40.150:FF:000119">
    <property type="entry name" value="C2 domain-containing protein"/>
    <property type="match status" value="1"/>
</dbReference>
<dbReference type="FunFam" id="2.60.40.150:FF:000128">
    <property type="entry name" value="C2 domain-containing protein"/>
    <property type="match status" value="1"/>
</dbReference>
<dbReference type="Gene3D" id="2.60.40.150">
    <property type="entry name" value="C2 domain"/>
    <property type="match status" value="4"/>
</dbReference>
<dbReference type="InterPro" id="IPR000008">
    <property type="entry name" value="C2_dom"/>
</dbReference>
<dbReference type="InterPro" id="IPR035892">
    <property type="entry name" value="C2_domain_sf"/>
</dbReference>
<dbReference type="InterPro" id="IPR047257">
    <property type="entry name" value="C2B_MCTP_PRT_plant"/>
</dbReference>
<dbReference type="InterPro" id="IPR047258">
    <property type="entry name" value="C2C_MCTP_PRT_plant"/>
</dbReference>
<dbReference type="InterPro" id="IPR047255">
    <property type="entry name" value="C2D_MCTP_PRT_plant"/>
</dbReference>
<dbReference type="InterPro" id="IPR013583">
    <property type="entry name" value="MCTP_C"/>
</dbReference>
<dbReference type="InterPro" id="IPR047259">
    <property type="entry name" value="QUIRKY-like"/>
</dbReference>
<dbReference type="PANTHER" id="PTHR31425:SF24">
    <property type="entry name" value="MULTIPLE C2 DOMAIN AND TRANSMEMBRANE REGION PROTEIN 2"/>
    <property type="match status" value="1"/>
</dbReference>
<dbReference type="PANTHER" id="PTHR31425">
    <property type="entry name" value="PHOSPHORIBOSYLANTHRANILATE TRANSFERASE ISOFORM 1"/>
    <property type="match status" value="1"/>
</dbReference>
<dbReference type="Pfam" id="PF00168">
    <property type="entry name" value="C2"/>
    <property type="match status" value="4"/>
</dbReference>
<dbReference type="Pfam" id="PF08372">
    <property type="entry name" value="PRT_C"/>
    <property type="match status" value="1"/>
</dbReference>
<dbReference type="SMART" id="SM00239">
    <property type="entry name" value="C2"/>
    <property type="match status" value="4"/>
</dbReference>
<dbReference type="SUPFAM" id="SSF49562">
    <property type="entry name" value="C2 domain (Calcium/lipid-binding domain, CaLB)"/>
    <property type="match status" value="4"/>
</dbReference>
<dbReference type="PROSITE" id="PS50004">
    <property type="entry name" value="C2"/>
    <property type="match status" value="4"/>
</dbReference>
<protein>
    <recommendedName>
        <fullName evidence="5">Multiple C2 domain and transmembrane region protein 2</fullName>
    </recommendedName>
</protein>
<sequence>MRNTTKLVVHVVDAQYLMPRDGQGSASPFVEVDFLNQLSKTRTVPKSLNPVWNQKLYFDYDQSVINQHNQHIEVSVYHERRPIPGRSFLGRVKISLCNIVYKDDQVYQRFTLEKKWLLSSVKGEIGLKFYISSSEEDQTFPLPSKPYTSPTQASASGTEEDTADSETEDSLKSFASAEEEDLADSVSECVEGKKSEEVKEPVQKLHRQEVFARPAPMQSIRLRSRENPHEAQKPMSRGANQLHPQNPNHLQSYGDTDLDDFKVKDMNLDLGERWPNPNAGERFTGTYDLVEQMFYLYVRVVKAKELPPGSITGGCDPYVEVKLGNYKGRTKIFDRKTTIPEWNQVFAFTKERIQSSVLEVFVKDKETLGRDDILGKVVFDLNEIPTRVPPNSPLAPQWYRLEDWRGEGKVVRGEIMLAVWMGTQADEAFPEAWHADSASVHGEGVFNIRSKVYVSPKLWYLRVNVIEAQDMIPSDRNRLPDVFVKASVGMQTLKTSICSIKTTNPLWKEDLVFVVAEPFEEQLVISVEDRVHTSKDEVIGKITLPMNVFEKRLDHRPVHSRWFNLDKYGTGVLEPDARRKEHKFSSRIHLRICLEGGYHVMDESTMYISDTRPTARQLWKQPVGMLEIGILGANGLVPMKLKDGRGSTNAYCVAKYGQKWVRTRTILDTLSPRWNEQYTWEVYDPCTVITLGVFDNSHLGSAQSGTADSRDARIGKVRIRLSTLEAHKIYTHSFPLLVLQPHGLKKTGDLQISVRFTTLSLANIIYNYGHPLLPKMHYLFPFTVNQVDGLRYQAMNIVSTRLGRAEPPLRKEVVEYMLDVDSHLWSMRRSKANFFRIMSLLSGYFLVGKWLEDVCNWRYPVTSVLVNVLFFILVMYPELILPTMFLYMFFIGLWNFRSRPRHPPHMDMKLSWAEAVGPDELDEEFDTFPTSRSQELVRLRYDRLRSVAGRIQTVVGDIAAQGERIQSLLSWRDPRATSLFILFCLAASVVLYAMPFKAIALASGLYYLRHPKFRSKLPSLPSNFFKRLPSSTDSLL</sequence>
<feature type="chain" id="PRO_0000457898" description="Multiple C2 domain and transmembrane region protein 2">
    <location>
        <begin position="1"/>
        <end position="1036"/>
    </location>
</feature>
<feature type="transmembrane region" description="Helical" evidence="1">
    <location>
        <begin position="871"/>
        <end position="891"/>
    </location>
</feature>
<feature type="transmembrane region" description="Helical" evidence="1">
    <location>
        <begin position="979"/>
        <end position="999"/>
    </location>
</feature>
<feature type="domain" description="C2 1" evidence="2">
    <location>
        <begin position="1"/>
        <end position="110"/>
    </location>
</feature>
<feature type="domain" description="C2 2" evidence="2">
    <location>
        <begin position="277"/>
        <end position="399"/>
    </location>
</feature>
<feature type="domain" description="C2 3" evidence="2">
    <location>
        <begin position="440"/>
        <end position="563"/>
    </location>
</feature>
<feature type="domain" description="C2 4" evidence="2">
    <location>
        <begin position="607"/>
        <end position="734"/>
    </location>
</feature>
<feature type="region of interest" description="Disordered" evidence="3">
    <location>
        <begin position="137"/>
        <end position="204"/>
    </location>
</feature>
<feature type="region of interest" description="Disordered" evidence="3">
    <location>
        <begin position="225"/>
        <end position="246"/>
    </location>
</feature>
<feature type="compositionally biased region" description="Polar residues" evidence="3">
    <location>
        <begin position="146"/>
        <end position="155"/>
    </location>
</feature>
<feature type="compositionally biased region" description="Acidic residues" evidence="3">
    <location>
        <begin position="158"/>
        <end position="168"/>
    </location>
</feature>
<feature type="compositionally biased region" description="Basic and acidic residues" evidence="3">
    <location>
        <begin position="190"/>
        <end position="204"/>
    </location>
</feature>
<feature type="binding site" evidence="2">
    <location>
        <position position="316"/>
    </location>
    <ligand>
        <name>Ca(2+)</name>
        <dbReference type="ChEBI" id="CHEBI:29108"/>
        <label>1</label>
    </ligand>
</feature>
<feature type="binding site" evidence="2">
    <location>
        <position position="364"/>
    </location>
    <ligand>
        <name>Ca(2+)</name>
        <dbReference type="ChEBI" id="CHEBI:29108"/>
        <label>1</label>
    </ligand>
</feature>
<feature type="binding site" evidence="2">
    <location>
        <position position="364"/>
    </location>
    <ligand>
        <name>Ca(2+)</name>
        <dbReference type="ChEBI" id="CHEBI:29108"/>
        <label>2</label>
    </ligand>
</feature>
<feature type="binding site" evidence="2">
    <location>
        <position position="366"/>
    </location>
    <ligand>
        <name>Ca(2+)</name>
        <dbReference type="ChEBI" id="CHEBI:29108"/>
        <label>1</label>
    </ligand>
</feature>
<feature type="binding site" evidence="2">
    <location>
        <position position="366"/>
    </location>
    <ligand>
        <name>Ca(2+)</name>
        <dbReference type="ChEBI" id="CHEBI:29108"/>
        <label>2</label>
    </ligand>
</feature>
<feature type="binding site" evidence="2">
    <location>
        <position position="372"/>
    </location>
    <ligand>
        <name>Ca(2+)</name>
        <dbReference type="ChEBI" id="CHEBI:29108"/>
        <label>2</label>
    </ligand>
</feature>
<organism>
    <name type="scientific">Arabidopsis thaliana</name>
    <name type="common">Mouse-ear cress</name>
    <dbReference type="NCBI Taxonomy" id="3702"/>
    <lineage>
        <taxon>Eukaryota</taxon>
        <taxon>Viridiplantae</taxon>
        <taxon>Streptophyta</taxon>
        <taxon>Embryophyta</taxon>
        <taxon>Tracheophyta</taxon>
        <taxon>Spermatophyta</taxon>
        <taxon>Magnoliopsida</taxon>
        <taxon>eudicotyledons</taxon>
        <taxon>Gunneridae</taxon>
        <taxon>Pentapetalae</taxon>
        <taxon>rosids</taxon>
        <taxon>malvids</taxon>
        <taxon>Brassicales</taxon>
        <taxon>Brassicaceae</taxon>
        <taxon>Camelineae</taxon>
        <taxon>Arabidopsis</taxon>
    </lineage>
</organism>
<keyword id="KW-0106">Calcium</keyword>
<keyword id="KW-1003">Cell membrane</keyword>
<keyword id="KW-0328">Glycosyltransferase</keyword>
<keyword id="KW-0472">Membrane</keyword>
<keyword id="KW-0479">Metal-binding</keyword>
<keyword id="KW-1185">Reference proteome</keyword>
<keyword id="KW-0677">Repeat</keyword>
<keyword id="KW-0808">Transferase</keyword>
<keyword id="KW-0812">Transmembrane</keyword>
<keyword id="KW-1133">Transmembrane helix</keyword>